<feature type="chain" id="PRO_0000077056" description="Chitinolytic alpha-amylase inhibitor PvCAI">
    <location>
        <begin position="1"/>
        <end position="25" status="greater than"/>
    </location>
</feature>
<feature type="non-terminal residue" evidence="3">
    <location>
        <position position="25"/>
    </location>
</feature>
<proteinExistence type="evidence at protein level"/>
<accession>P84708</accession>
<comment type="function">
    <text evidence="2">Alpha-amylase inhibitor, active against Z.subfasciatus alpha-amylase (ZSA) but not porcine pancreatic alpha-amylase (PPA). Has chitinase activity.</text>
</comment>
<comment type="catalytic activity">
    <reaction evidence="2">
        <text>Random endo-hydrolysis of N-acetyl-beta-D-glucosaminide (1-&gt;4)-beta-linkages in chitin and chitodextrins.</text>
        <dbReference type="EC" id="3.2.1.14"/>
    </reaction>
</comment>
<comment type="subunit">
    <text evidence="2">Homodimer.</text>
</comment>
<comment type="mass spectrometry" mass="33330.0" error="10.0" method="MALDI" evidence="2"/>
<comment type="similarity">
    <text evidence="1">Belongs to the glycosyl hydrolase 18 family. Chitinase class II subfamily.</text>
</comment>
<evidence type="ECO:0000255" key="1"/>
<evidence type="ECO:0000269" key="2">
    <source>
    </source>
</evidence>
<evidence type="ECO:0000303" key="3">
    <source>
    </source>
</evidence>
<evidence type="ECO:0000305" key="4"/>
<organism>
    <name type="scientific">Phaseolus vulgaris</name>
    <name type="common">Kidney bean</name>
    <name type="synonym">French bean</name>
    <dbReference type="NCBI Taxonomy" id="3885"/>
    <lineage>
        <taxon>Eukaryota</taxon>
        <taxon>Viridiplantae</taxon>
        <taxon>Streptophyta</taxon>
        <taxon>Embryophyta</taxon>
        <taxon>Tracheophyta</taxon>
        <taxon>Spermatophyta</taxon>
        <taxon>Magnoliopsida</taxon>
        <taxon>eudicotyledons</taxon>
        <taxon>Gunneridae</taxon>
        <taxon>Pentapetalae</taxon>
        <taxon>rosids</taxon>
        <taxon>fabids</taxon>
        <taxon>Fabales</taxon>
        <taxon>Fabaceae</taxon>
        <taxon>Papilionoideae</taxon>
        <taxon>50 kb inversion clade</taxon>
        <taxon>NPAAA clade</taxon>
        <taxon>indigoferoid/millettioid clade</taxon>
        <taxon>Phaseoleae</taxon>
        <taxon>Phaseolus</taxon>
    </lineage>
</organism>
<reference evidence="4" key="1">
    <citation type="journal article" date="2005" name="FEBS Lett.">
        <title>Identification of a novel bean alpha-amylase inhibitor with chitinolytic activity.</title>
        <authorList>
            <person name="Dayler C.S.A."/>
            <person name="Mendes P.A.M."/>
            <person name="Prates M.V."/>
            <person name="Bloch C. Jr."/>
            <person name="Franco O.L."/>
            <person name="Grossi-de-Sa M.F."/>
        </authorList>
    </citation>
    <scope>PROTEIN SEQUENCE</scope>
    <scope>FUNCTION</scope>
    <scope>CATALYTIC ACTIVITY</scope>
    <scope>SUBUNIT</scope>
    <scope>MASS SPECTROMETRY</scope>
    <source>
        <strain evidence="2">G12953</strain>
        <tissue evidence="2">Cotyledon</tissue>
    </source>
</reference>
<protein>
    <recommendedName>
        <fullName>Chitinolytic alpha-amylase inhibitor PvCAI</fullName>
        <ecNumber>3.2.1.14</ecNumber>
    </recommendedName>
</protein>
<sequence length="25" mass="2705">HEDNAGIAVYWGQDAREGDLVTACN</sequence>
<name>CAI_PHAVU</name>
<dbReference type="EC" id="3.2.1.14"/>
<dbReference type="eggNOG" id="KOG4701">
    <property type="taxonomic scope" value="Eukaryota"/>
</dbReference>
<dbReference type="GO" id="GO:0015066">
    <property type="term" value="F:alpha-amylase inhibitor activity"/>
    <property type="evidence" value="ECO:0000314"/>
    <property type="project" value="UniProtKB"/>
</dbReference>
<dbReference type="GO" id="GO:0004568">
    <property type="term" value="F:chitinase activity"/>
    <property type="evidence" value="ECO:0000314"/>
    <property type="project" value="UniProtKB"/>
</dbReference>
<dbReference type="GO" id="GO:0008843">
    <property type="term" value="F:endochitinase activity"/>
    <property type="evidence" value="ECO:0007669"/>
    <property type="project" value="UniProtKB-EC"/>
</dbReference>
<dbReference type="GO" id="GO:0006032">
    <property type="term" value="P:chitin catabolic process"/>
    <property type="evidence" value="ECO:0007669"/>
    <property type="project" value="UniProtKB-KW"/>
</dbReference>
<dbReference type="GO" id="GO:0000272">
    <property type="term" value="P:polysaccharide catabolic process"/>
    <property type="evidence" value="ECO:0000314"/>
    <property type="project" value="UniProtKB"/>
</dbReference>
<keyword id="KW-0022">Alpha-amylase inhibitor</keyword>
<keyword id="KW-0119">Carbohydrate metabolism</keyword>
<keyword id="KW-0146">Chitin degradation</keyword>
<keyword id="KW-0903">Direct protein sequencing</keyword>
<keyword id="KW-0326">Glycosidase</keyword>
<keyword id="KW-0378">Hydrolase</keyword>
<keyword id="KW-0624">Polysaccharide degradation</keyword>